<reference key="1">
    <citation type="journal article" date="2006" name="Genome Res.">
        <title>Skewed genomic variability in strains of the toxigenic bacterial pathogen, Clostridium perfringens.</title>
        <authorList>
            <person name="Myers G.S.A."/>
            <person name="Rasko D.A."/>
            <person name="Cheung J.K."/>
            <person name="Ravel J."/>
            <person name="Seshadri R."/>
            <person name="DeBoy R.T."/>
            <person name="Ren Q."/>
            <person name="Varga J."/>
            <person name="Awad M.M."/>
            <person name="Brinkac L.M."/>
            <person name="Daugherty S.C."/>
            <person name="Haft D.H."/>
            <person name="Dodson R.J."/>
            <person name="Madupu R."/>
            <person name="Nelson W.C."/>
            <person name="Rosovitz M.J."/>
            <person name="Sullivan S.A."/>
            <person name="Khouri H."/>
            <person name="Dimitrov G.I."/>
            <person name="Watkins K.L."/>
            <person name="Mulligan S."/>
            <person name="Benton J."/>
            <person name="Radune D."/>
            <person name="Fisher D.J."/>
            <person name="Atkins H.S."/>
            <person name="Hiscox T."/>
            <person name="Jost B.H."/>
            <person name="Billington S.J."/>
            <person name="Songer J.G."/>
            <person name="McClane B.A."/>
            <person name="Titball R.W."/>
            <person name="Rood J.I."/>
            <person name="Melville S.B."/>
            <person name="Paulsen I.T."/>
        </authorList>
    </citation>
    <scope>NUCLEOTIDE SEQUENCE [LARGE SCALE GENOMIC DNA]</scope>
    <source>
        <strain>ATCC 13124 / DSM 756 / JCM 1290 / NCIMB 6125 / NCTC 8237 / S 107 / Type A</strain>
    </source>
</reference>
<accession>Q0TMA0</accession>
<protein>
    <recommendedName>
        <fullName evidence="1">Glycerol kinase</fullName>
        <ecNumber evidence="1">2.7.1.30</ecNumber>
    </recommendedName>
    <alternativeName>
        <fullName evidence="1">ATP:glycerol 3-phosphotransferase</fullName>
    </alternativeName>
    <alternativeName>
        <fullName evidence="1">Glycerokinase</fullName>
        <shortName evidence="1">GK</shortName>
    </alternativeName>
</protein>
<comment type="function">
    <text evidence="1">Key enzyme in the regulation of glycerol uptake and metabolism. Catalyzes the phosphorylation of glycerol to yield sn-glycerol 3-phosphate.</text>
</comment>
<comment type="catalytic activity">
    <reaction evidence="1">
        <text>glycerol + ATP = sn-glycerol 3-phosphate + ADP + H(+)</text>
        <dbReference type="Rhea" id="RHEA:21644"/>
        <dbReference type="ChEBI" id="CHEBI:15378"/>
        <dbReference type="ChEBI" id="CHEBI:17754"/>
        <dbReference type="ChEBI" id="CHEBI:30616"/>
        <dbReference type="ChEBI" id="CHEBI:57597"/>
        <dbReference type="ChEBI" id="CHEBI:456216"/>
        <dbReference type="EC" id="2.7.1.30"/>
    </reaction>
</comment>
<comment type="activity regulation">
    <text evidence="1">Activated by phosphorylation and inhibited by fructose 1,6-bisphosphate (FBP).</text>
</comment>
<comment type="pathway">
    <text evidence="1">Polyol metabolism; glycerol degradation via glycerol kinase pathway; sn-glycerol 3-phosphate from glycerol: step 1/1.</text>
</comment>
<comment type="subunit">
    <text evidence="1">Homotetramer and homodimer (in equilibrium).</text>
</comment>
<comment type="similarity">
    <text evidence="1">Belongs to the FGGY kinase family.</text>
</comment>
<feature type="chain" id="PRO_1000020722" description="Glycerol kinase">
    <location>
        <begin position="1"/>
        <end position="500"/>
    </location>
</feature>
<feature type="binding site" evidence="1">
    <location>
        <position position="12"/>
    </location>
    <ligand>
        <name>ADP</name>
        <dbReference type="ChEBI" id="CHEBI:456216"/>
    </ligand>
</feature>
<feature type="binding site" evidence="1">
    <location>
        <position position="12"/>
    </location>
    <ligand>
        <name>ATP</name>
        <dbReference type="ChEBI" id="CHEBI:30616"/>
    </ligand>
</feature>
<feature type="binding site" evidence="1">
    <location>
        <position position="12"/>
    </location>
    <ligand>
        <name>sn-glycerol 3-phosphate</name>
        <dbReference type="ChEBI" id="CHEBI:57597"/>
    </ligand>
</feature>
<feature type="binding site" evidence="1">
    <location>
        <position position="13"/>
    </location>
    <ligand>
        <name>ATP</name>
        <dbReference type="ChEBI" id="CHEBI:30616"/>
    </ligand>
</feature>
<feature type="binding site" evidence="1">
    <location>
        <position position="14"/>
    </location>
    <ligand>
        <name>ATP</name>
        <dbReference type="ChEBI" id="CHEBI:30616"/>
    </ligand>
</feature>
<feature type="binding site" evidence="1">
    <location>
        <position position="16"/>
    </location>
    <ligand>
        <name>ADP</name>
        <dbReference type="ChEBI" id="CHEBI:456216"/>
    </ligand>
</feature>
<feature type="binding site" evidence="1">
    <location>
        <position position="82"/>
    </location>
    <ligand>
        <name>glycerol</name>
        <dbReference type="ChEBI" id="CHEBI:17754"/>
    </ligand>
</feature>
<feature type="binding site" evidence="1">
    <location>
        <position position="82"/>
    </location>
    <ligand>
        <name>sn-glycerol 3-phosphate</name>
        <dbReference type="ChEBI" id="CHEBI:57597"/>
    </ligand>
</feature>
<feature type="binding site" evidence="1">
    <location>
        <position position="83"/>
    </location>
    <ligand>
        <name>glycerol</name>
        <dbReference type="ChEBI" id="CHEBI:17754"/>
    </ligand>
</feature>
<feature type="binding site" evidence="1">
    <location>
        <position position="83"/>
    </location>
    <ligand>
        <name>sn-glycerol 3-phosphate</name>
        <dbReference type="ChEBI" id="CHEBI:57597"/>
    </ligand>
</feature>
<feature type="binding site" evidence="1">
    <location>
        <position position="135"/>
    </location>
    <ligand>
        <name>glycerol</name>
        <dbReference type="ChEBI" id="CHEBI:17754"/>
    </ligand>
</feature>
<feature type="binding site" evidence="1">
    <location>
        <position position="135"/>
    </location>
    <ligand>
        <name>sn-glycerol 3-phosphate</name>
        <dbReference type="ChEBI" id="CHEBI:57597"/>
    </ligand>
</feature>
<feature type="binding site" evidence="1">
    <location>
        <position position="245"/>
    </location>
    <ligand>
        <name>glycerol</name>
        <dbReference type="ChEBI" id="CHEBI:17754"/>
    </ligand>
</feature>
<feature type="binding site" evidence="1">
    <location>
        <position position="245"/>
    </location>
    <ligand>
        <name>sn-glycerol 3-phosphate</name>
        <dbReference type="ChEBI" id="CHEBI:57597"/>
    </ligand>
</feature>
<feature type="binding site" evidence="1">
    <location>
        <position position="246"/>
    </location>
    <ligand>
        <name>glycerol</name>
        <dbReference type="ChEBI" id="CHEBI:17754"/>
    </ligand>
</feature>
<feature type="binding site" evidence="1">
    <location>
        <position position="267"/>
    </location>
    <ligand>
        <name>ADP</name>
        <dbReference type="ChEBI" id="CHEBI:456216"/>
    </ligand>
</feature>
<feature type="binding site" evidence="1">
    <location>
        <position position="267"/>
    </location>
    <ligand>
        <name>ATP</name>
        <dbReference type="ChEBI" id="CHEBI:30616"/>
    </ligand>
</feature>
<feature type="binding site" evidence="1">
    <location>
        <position position="310"/>
    </location>
    <ligand>
        <name>ADP</name>
        <dbReference type="ChEBI" id="CHEBI:456216"/>
    </ligand>
</feature>
<feature type="binding site" evidence="1">
    <location>
        <position position="310"/>
    </location>
    <ligand>
        <name>ATP</name>
        <dbReference type="ChEBI" id="CHEBI:30616"/>
    </ligand>
</feature>
<feature type="binding site" evidence="1">
    <location>
        <position position="314"/>
    </location>
    <ligand>
        <name>ATP</name>
        <dbReference type="ChEBI" id="CHEBI:30616"/>
    </ligand>
</feature>
<feature type="binding site" evidence="1">
    <location>
        <position position="411"/>
    </location>
    <ligand>
        <name>ADP</name>
        <dbReference type="ChEBI" id="CHEBI:456216"/>
    </ligand>
</feature>
<feature type="binding site" evidence="1">
    <location>
        <position position="411"/>
    </location>
    <ligand>
        <name>ATP</name>
        <dbReference type="ChEBI" id="CHEBI:30616"/>
    </ligand>
</feature>
<feature type="binding site" evidence="1">
    <location>
        <position position="415"/>
    </location>
    <ligand>
        <name>ADP</name>
        <dbReference type="ChEBI" id="CHEBI:456216"/>
    </ligand>
</feature>
<organism>
    <name type="scientific">Clostridium perfringens (strain ATCC 13124 / DSM 756 / JCM 1290 / NCIMB 6125 / NCTC 8237 / Type A)</name>
    <dbReference type="NCBI Taxonomy" id="195103"/>
    <lineage>
        <taxon>Bacteria</taxon>
        <taxon>Bacillati</taxon>
        <taxon>Bacillota</taxon>
        <taxon>Clostridia</taxon>
        <taxon>Eubacteriales</taxon>
        <taxon>Clostridiaceae</taxon>
        <taxon>Clostridium</taxon>
    </lineage>
</organism>
<name>GLPK_CLOP1</name>
<proteinExistence type="inferred from homology"/>
<keyword id="KW-0067">ATP-binding</keyword>
<keyword id="KW-0319">Glycerol metabolism</keyword>
<keyword id="KW-0418">Kinase</keyword>
<keyword id="KW-0547">Nucleotide-binding</keyword>
<keyword id="KW-0808">Transferase</keyword>
<evidence type="ECO:0000255" key="1">
    <source>
        <dbReference type="HAMAP-Rule" id="MF_00186"/>
    </source>
</evidence>
<dbReference type="EC" id="2.7.1.30" evidence="1"/>
<dbReference type="EMBL" id="CP000246">
    <property type="protein sequence ID" value="ABG82764.1"/>
    <property type="molecule type" value="Genomic_DNA"/>
</dbReference>
<dbReference type="RefSeq" id="WP_003456800.1">
    <property type="nucleotide sequence ID" value="NC_008261.1"/>
</dbReference>
<dbReference type="SMR" id="Q0TMA0"/>
<dbReference type="STRING" id="195103.CPF_2876"/>
<dbReference type="PaxDb" id="195103-CPF_2876"/>
<dbReference type="GeneID" id="93000844"/>
<dbReference type="KEGG" id="cpf:CPF_2876"/>
<dbReference type="eggNOG" id="COG0554">
    <property type="taxonomic scope" value="Bacteria"/>
</dbReference>
<dbReference type="HOGENOM" id="CLU_009281_2_3_9"/>
<dbReference type="UniPathway" id="UPA00618">
    <property type="reaction ID" value="UER00672"/>
</dbReference>
<dbReference type="Proteomes" id="UP000001823">
    <property type="component" value="Chromosome"/>
</dbReference>
<dbReference type="GO" id="GO:0005829">
    <property type="term" value="C:cytosol"/>
    <property type="evidence" value="ECO:0007669"/>
    <property type="project" value="TreeGrafter"/>
</dbReference>
<dbReference type="GO" id="GO:0005524">
    <property type="term" value="F:ATP binding"/>
    <property type="evidence" value="ECO:0007669"/>
    <property type="project" value="UniProtKB-UniRule"/>
</dbReference>
<dbReference type="GO" id="GO:0004370">
    <property type="term" value="F:glycerol kinase activity"/>
    <property type="evidence" value="ECO:0000250"/>
    <property type="project" value="UniProtKB"/>
</dbReference>
<dbReference type="GO" id="GO:0019563">
    <property type="term" value="P:glycerol catabolic process"/>
    <property type="evidence" value="ECO:0007669"/>
    <property type="project" value="UniProtKB-UniRule"/>
</dbReference>
<dbReference type="GO" id="GO:0006071">
    <property type="term" value="P:glycerol metabolic process"/>
    <property type="evidence" value="ECO:0000250"/>
    <property type="project" value="UniProtKB"/>
</dbReference>
<dbReference type="GO" id="GO:0006072">
    <property type="term" value="P:glycerol-3-phosphate metabolic process"/>
    <property type="evidence" value="ECO:0007669"/>
    <property type="project" value="InterPro"/>
</dbReference>
<dbReference type="CDD" id="cd07786">
    <property type="entry name" value="FGGY_EcGK_like"/>
    <property type="match status" value="1"/>
</dbReference>
<dbReference type="FunFam" id="3.30.420.40:FF:000007">
    <property type="entry name" value="Glycerol kinase"/>
    <property type="match status" value="1"/>
</dbReference>
<dbReference type="FunFam" id="3.30.420.40:FF:000008">
    <property type="entry name" value="Glycerol kinase"/>
    <property type="match status" value="1"/>
</dbReference>
<dbReference type="Gene3D" id="3.30.420.40">
    <property type="match status" value="2"/>
</dbReference>
<dbReference type="HAMAP" id="MF_00186">
    <property type="entry name" value="Glycerol_kin"/>
    <property type="match status" value="1"/>
</dbReference>
<dbReference type="InterPro" id="IPR043129">
    <property type="entry name" value="ATPase_NBD"/>
</dbReference>
<dbReference type="InterPro" id="IPR000577">
    <property type="entry name" value="Carb_kinase_FGGY"/>
</dbReference>
<dbReference type="InterPro" id="IPR018483">
    <property type="entry name" value="Carb_kinase_FGGY_CS"/>
</dbReference>
<dbReference type="InterPro" id="IPR018485">
    <property type="entry name" value="FGGY_C"/>
</dbReference>
<dbReference type="InterPro" id="IPR018484">
    <property type="entry name" value="FGGY_N"/>
</dbReference>
<dbReference type="InterPro" id="IPR005999">
    <property type="entry name" value="Glycerol_kin"/>
</dbReference>
<dbReference type="NCBIfam" id="TIGR01311">
    <property type="entry name" value="glycerol_kin"/>
    <property type="match status" value="1"/>
</dbReference>
<dbReference type="NCBIfam" id="NF000756">
    <property type="entry name" value="PRK00047.1"/>
    <property type="match status" value="1"/>
</dbReference>
<dbReference type="PANTHER" id="PTHR10196:SF69">
    <property type="entry name" value="GLYCEROL KINASE"/>
    <property type="match status" value="1"/>
</dbReference>
<dbReference type="PANTHER" id="PTHR10196">
    <property type="entry name" value="SUGAR KINASE"/>
    <property type="match status" value="1"/>
</dbReference>
<dbReference type="Pfam" id="PF02782">
    <property type="entry name" value="FGGY_C"/>
    <property type="match status" value="1"/>
</dbReference>
<dbReference type="Pfam" id="PF00370">
    <property type="entry name" value="FGGY_N"/>
    <property type="match status" value="1"/>
</dbReference>
<dbReference type="PIRSF" id="PIRSF000538">
    <property type="entry name" value="GlpK"/>
    <property type="match status" value="1"/>
</dbReference>
<dbReference type="SUPFAM" id="SSF53067">
    <property type="entry name" value="Actin-like ATPase domain"/>
    <property type="match status" value="2"/>
</dbReference>
<dbReference type="PROSITE" id="PS00933">
    <property type="entry name" value="FGGY_KINASES_1"/>
    <property type="match status" value="1"/>
</dbReference>
<dbReference type="PROSITE" id="PS00445">
    <property type="entry name" value="FGGY_KINASES_2"/>
    <property type="match status" value="1"/>
</dbReference>
<gene>
    <name evidence="1" type="primary">glpK</name>
    <name type="ordered locus">CPF_2876</name>
</gene>
<sequence length="500" mass="56003">MKKYIVALDQGTTSSRAIIFDKEQNIIGVSQKEFNQIYPREGWVEHDPMEIWATQYSVLQEVMAKCNITQENIAAIGITNQRETTIVWDKNTGVPIYNAIVWQCRRTADICDELKERDGLVDYIRENTGLVLDAYFSGTKIKWILDNVEGAREKAEKGELLFGTVDSWLVWKLTNGKVHVTDYTNASRTMIFNIKNLEWDERMLKELDIPRSMLPEVKNSSEIYGYANLGAKGGIRVPIAGIAGDQQAALFGQAAFNKGDVKNTYGTGCFLLMNTGEELVKSKSGLLTTIAIGLHGKVQYALEGSVFVGGAVIQWLRDELRIISDSSDTEYFATKVEDNGGVYVVPAFVGLGAPYWDMYARGTIVGLTRGTNRNHIIRAALESIAYQTRDVLEAMINDVGYDINCIKVDGGASRNNFLMQFQSDLVGKKVIKPIITETTALGAAYLAGLAVGYWSDKEEIAKLWFASEEFEPTISEERRNKYHKKWKKAVERSKGWALED</sequence>